<name>GFA_BRADU</name>
<dbReference type="EC" id="4.4.1.22"/>
<dbReference type="EMBL" id="BA000040">
    <property type="protein sequence ID" value="BAC51481.1"/>
    <property type="molecule type" value="Genomic_DNA"/>
</dbReference>
<dbReference type="RefSeq" id="NP_772856.1">
    <property type="nucleotide sequence ID" value="NC_004463.1"/>
</dbReference>
<dbReference type="RefSeq" id="WP_011088956.1">
    <property type="nucleotide sequence ID" value="NC_004463.1"/>
</dbReference>
<dbReference type="SMR" id="Q89GX9"/>
<dbReference type="STRING" id="224911.AAV28_28640"/>
<dbReference type="EnsemblBacteria" id="BAC51481">
    <property type="protein sequence ID" value="BAC51481"/>
    <property type="gene ID" value="BAC51481"/>
</dbReference>
<dbReference type="GeneID" id="46493205"/>
<dbReference type="KEGG" id="bja:blr6216"/>
<dbReference type="PATRIC" id="fig|224911.44.peg.6187"/>
<dbReference type="eggNOG" id="COG3791">
    <property type="taxonomic scope" value="Bacteria"/>
</dbReference>
<dbReference type="HOGENOM" id="CLU_090716_0_0_5"/>
<dbReference type="InParanoid" id="Q89GX9"/>
<dbReference type="OrthoDB" id="9011205at2"/>
<dbReference type="UniPathway" id="UPA00562">
    <property type="reaction ID" value="UER00621"/>
</dbReference>
<dbReference type="Proteomes" id="UP000002526">
    <property type="component" value="Chromosome"/>
</dbReference>
<dbReference type="GO" id="GO:0051907">
    <property type="term" value="F:S-(hydroxymethyl)glutathione synthase activity"/>
    <property type="evidence" value="ECO:0007669"/>
    <property type="project" value="UniProtKB-UniRule"/>
</dbReference>
<dbReference type="GO" id="GO:0008270">
    <property type="term" value="F:zinc ion binding"/>
    <property type="evidence" value="ECO:0007669"/>
    <property type="project" value="UniProtKB-UniRule"/>
</dbReference>
<dbReference type="GO" id="GO:0046294">
    <property type="term" value="P:formaldehyde catabolic process"/>
    <property type="evidence" value="ECO:0007669"/>
    <property type="project" value="UniProtKB-UniRule"/>
</dbReference>
<dbReference type="Gene3D" id="3.90.1590.10">
    <property type="entry name" value="glutathione-dependent formaldehyde- activating enzyme (gfa)"/>
    <property type="match status" value="1"/>
</dbReference>
<dbReference type="HAMAP" id="MF_00723">
    <property type="entry name" value="Formald_GSH"/>
    <property type="match status" value="1"/>
</dbReference>
<dbReference type="InterPro" id="IPR006913">
    <property type="entry name" value="CENP-V/GFA"/>
</dbReference>
<dbReference type="InterPro" id="IPR014185">
    <property type="entry name" value="Formald_GSH"/>
</dbReference>
<dbReference type="InterPro" id="IPR011057">
    <property type="entry name" value="Mss4-like_sf"/>
</dbReference>
<dbReference type="NCBIfam" id="TIGR02820">
    <property type="entry name" value="formald_GSH"/>
    <property type="match status" value="1"/>
</dbReference>
<dbReference type="NCBIfam" id="NF003829">
    <property type="entry name" value="PRK05417.1"/>
    <property type="match status" value="1"/>
</dbReference>
<dbReference type="PANTHER" id="PTHR33337:SF40">
    <property type="entry name" value="CENP-V_GFA DOMAIN-CONTAINING PROTEIN-RELATED"/>
    <property type="match status" value="1"/>
</dbReference>
<dbReference type="PANTHER" id="PTHR33337">
    <property type="entry name" value="GFA DOMAIN-CONTAINING PROTEIN"/>
    <property type="match status" value="1"/>
</dbReference>
<dbReference type="Pfam" id="PF04828">
    <property type="entry name" value="GFA"/>
    <property type="match status" value="1"/>
</dbReference>
<dbReference type="PIRSF" id="PIRSF033318">
    <property type="entry name" value="Formald_GSH"/>
    <property type="match status" value="1"/>
</dbReference>
<dbReference type="SUPFAM" id="SSF51316">
    <property type="entry name" value="Mss4-like"/>
    <property type="match status" value="1"/>
</dbReference>
<dbReference type="PROSITE" id="PS51891">
    <property type="entry name" value="CENP_V_GFA"/>
    <property type="match status" value="1"/>
</dbReference>
<gene>
    <name type="primary">gfa</name>
    <name type="ordered locus">blr6216</name>
</gene>
<organism>
    <name type="scientific">Bradyrhizobium diazoefficiens (strain JCM 10833 / BCRC 13528 / IAM 13628 / NBRC 14792 / USDA 110)</name>
    <dbReference type="NCBI Taxonomy" id="224911"/>
    <lineage>
        <taxon>Bacteria</taxon>
        <taxon>Pseudomonadati</taxon>
        <taxon>Pseudomonadota</taxon>
        <taxon>Alphaproteobacteria</taxon>
        <taxon>Hyphomicrobiales</taxon>
        <taxon>Nitrobacteraceae</taxon>
        <taxon>Bradyrhizobium</taxon>
    </lineage>
</organism>
<keyword id="KW-0456">Lyase</keyword>
<keyword id="KW-0479">Metal-binding</keyword>
<keyword id="KW-1185">Reference proteome</keyword>
<keyword id="KW-0862">Zinc</keyword>
<protein>
    <recommendedName>
        <fullName>Glutathione-dependent formaldehyde-activating enzyme</fullName>
        <ecNumber>4.4.1.22</ecNumber>
    </recommendedName>
    <alternativeName>
        <fullName>S-(hydroxymethyl)glutathione synthase</fullName>
    </alternativeName>
</protein>
<comment type="function">
    <text evidence="1">Catalyzes the condensation of formaldehyde and glutathione to S-hydroxymethylglutathione.</text>
</comment>
<comment type="catalytic activity">
    <reaction>
        <text>S-(hydroxymethyl)glutathione = glutathione + formaldehyde</text>
        <dbReference type="Rhea" id="RHEA:22488"/>
        <dbReference type="ChEBI" id="CHEBI:16842"/>
        <dbReference type="ChEBI" id="CHEBI:57925"/>
        <dbReference type="ChEBI" id="CHEBI:58758"/>
        <dbReference type="EC" id="4.4.1.22"/>
    </reaction>
</comment>
<comment type="cofactor">
    <cofactor evidence="2">
        <name>Zn(2+)</name>
        <dbReference type="ChEBI" id="CHEBI:29105"/>
    </cofactor>
    <text evidence="2">Binds 2 Zn(2+) ions per subunit.</text>
</comment>
<comment type="pathway">
    <text>One-carbon metabolism; formaldehyde degradation; formate from formaldehyde (glutathione route): step 1/3.</text>
</comment>
<comment type="similarity">
    <text evidence="3">Belongs to the Gfa family.</text>
</comment>
<accession>Q89GX9</accession>
<sequence>MTIALHPSIDNGLKQGSGSFAGGTLACKCKDHQVKVGIKGDVAHNHACGCTKCWKPQGATFSVVAVVPRQNVTVLENGDKLEIVDASAVIQRHACKACGTHMYGRIENKNHPFYGLDFIHPELFQEQGSQAPQFAAFVSSVIESGVKPEQMAGIRSRLKEIGLEPYDCLSPALMDAIATHVAKAKAA</sequence>
<reference key="1">
    <citation type="journal article" date="2002" name="DNA Res.">
        <title>Complete genomic sequence of nitrogen-fixing symbiotic bacterium Bradyrhizobium japonicum USDA110.</title>
        <authorList>
            <person name="Kaneko T."/>
            <person name="Nakamura Y."/>
            <person name="Sato S."/>
            <person name="Minamisawa K."/>
            <person name="Uchiumi T."/>
            <person name="Sasamoto S."/>
            <person name="Watanabe A."/>
            <person name="Idesawa K."/>
            <person name="Iriguchi M."/>
            <person name="Kawashima K."/>
            <person name="Kohara M."/>
            <person name="Matsumoto M."/>
            <person name="Shimpo S."/>
            <person name="Tsuruoka H."/>
            <person name="Wada T."/>
            <person name="Yamada M."/>
            <person name="Tabata S."/>
        </authorList>
    </citation>
    <scope>NUCLEOTIDE SEQUENCE [LARGE SCALE GENOMIC DNA]</scope>
    <source>
        <strain>JCM 10833 / BCRC 13528 / IAM 13628 / NBRC 14792 / USDA 110</strain>
    </source>
</reference>
<proteinExistence type="inferred from homology"/>
<evidence type="ECO:0000250" key="1"/>
<evidence type="ECO:0000255" key="2">
    <source>
        <dbReference type="PROSITE-ProRule" id="PRU01239"/>
    </source>
</evidence>
<evidence type="ECO:0000305" key="3"/>
<feature type="chain" id="PRO_0000220320" description="Glutathione-dependent formaldehyde-activating enzyme">
    <location>
        <begin position="1"/>
        <end position="187"/>
    </location>
</feature>
<feature type="domain" description="CENP-V/GFA" evidence="2">
    <location>
        <begin position="20"/>
        <end position="167"/>
    </location>
</feature>
<feature type="binding site" evidence="2">
    <location>
        <position position="27"/>
    </location>
    <ligand>
        <name>Zn(2+)</name>
        <dbReference type="ChEBI" id="CHEBI:29105"/>
        <label>1</label>
        <note>structural</note>
    </ligand>
</feature>
<feature type="binding site" evidence="2">
    <location>
        <position position="29"/>
    </location>
    <ligand>
        <name>Zn(2+)</name>
        <dbReference type="ChEBI" id="CHEBI:29105"/>
        <label>1</label>
        <note>structural</note>
    </ligand>
</feature>
<feature type="binding site" evidence="2">
    <location>
        <position position="48"/>
    </location>
    <ligand>
        <name>Zn(2+)</name>
        <dbReference type="ChEBI" id="CHEBI:29105"/>
        <label>2</label>
        <note>catalytic</note>
    </ligand>
</feature>
<feature type="binding site" evidence="2">
    <location>
        <position position="50"/>
    </location>
    <ligand>
        <name>Zn(2+)</name>
        <dbReference type="ChEBI" id="CHEBI:29105"/>
        <label>2</label>
        <note>catalytic</note>
    </ligand>
</feature>
<feature type="binding site" evidence="2">
    <location>
        <position position="53"/>
    </location>
    <ligand>
        <name>Zn(2+)</name>
        <dbReference type="ChEBI" id="CHEBI:29105"/>
        <label>2</label>
        <note>catalytic</note>
    </ligand>
</feature>
<feature type="binding site" evidence="2">
    <location>
        <position position="95"/>
    </location>
    <ligand>
        <name>Zn(2+)</name>
        <dbReference type="ChEBI" id="CHEBI:29105"/>
        <label>1</label>
        <note>structural</note>
    </ligand>
</feature>
<feature type="binding site" evidence="2">
    <location>
        <position position="98"/>
    </location>
    <ligand>
        <name>Zn(2+)</name>
        <dbReference type="ChEBI" id="CHEBI:29105"/>
        <label>1</label>
        <note>structural</note>
    </ligand>
</feature>